<sequence>MEHIQGAWKTISNGFGFKDAVFDGSSCISPTIVQQFGYQRRASDDGKLTDPSKTSNTIRVFLPNKQRTVVNVRNGMSLHDCLMKALKVRGLQPECCAVFRLLHEHKGKKARLDWNTDAASLIGEELQVDFLDHVPLTTHNFARKTFLKLAFCDICQKFLLNGFRCQTCGYKFHEHCSTKVPTMCVDWSNIRQLLLFPNSTIGDSGVPALPSLTMRRMRESVSRMPVSSQHRYSTPHAFTFNTSSPSSEGSLSQRQRSTSTPNVHMVSTTLPVDSRMIEDAIRSHSESASPSALSSSPNNLSPTGWSQPKTPVPAQRERAPVSGTQEKNKIRPRGQRDSSYYWEIEASEVMLSTRIGSGSFGTVYKGKWHGDVAVKILKVVDPTPEQFQAFRNEVAVLRKTRHVNILLFMGYMTKDNLAIVTQWCEGSSLYKHLHVQETKFQMFQLIDIARQTAQGMDYLHAKNIIHRDMKSNNIFLHEGLTVKIGDFGLATVKSRWSGSQQVEQPTGSVLWMAPEVIRMQDNNPFSFQSDVYSYGIVLYELMTGELPYSHINNRDQIIFMVGRGYASPDLSKLYKNCPKAMKRLVADCVKKVKEERPLFPQILSSIELLQHSLPKINRSASEPSLHRAAHTEDINACTLTTSPRLPVF</sequence>
<comment type="function">
    <text evidence="2">Serine/threonine-protein kinase that acts as a regulatory link between the membrane-associated Ras GTPases and the MAPK/ERK cascade, and this critical regulatory link functions as a switch determining cell fate decisions including proliferation, differentiation, apoptosis, survival and oncogenic transformation. RAF1 activation initiates a mitogen-activated protein kinase (MAPK) cascade that comprises a sequential phosphorylation of the dual-specific MAPK kinases (MAP2K1/MEK1 and MAP2K2/MEK2) and the extracellular signal-regulated kinases (MAPK3/ERK1 and MAPK1/ERK2). The phosphorylated form of RAF1 (on residues Ser-338 and Ser-339, by PAK1) phosphorylates BAD/Bcl2-antagonist of cell death at 'Ser-75'. Phosphorylates adenylyl cyclases: ADCY2, ADCY5 and ADCY6, resulting in their activation. Phosphorylates PPP1R12A resulting in inhibition of the phosphatase activity. Phosphorylates TNNT2/cardiac muscle troponin T. Can promote NF-kB activation and inhibit signal transducers involved in motility (ROCK2), apoptosis (MAP3K5/ASK1 and STK3/MST2), proliferation and angiogenesis (RB1). Can protect cells from apoptosis also by translocating to the mitochondria where it binds BCL2 and displaces BAD/Bcl2-antagonist of cell death. Regulates Rho signaling and migration, and is required for normal wound healing. Plays a role in the oncogenic transformation of epithelial cells via repression of the TJ protein, occludin (OCLN) by inducing the up-regulation of a transcriptional repressor SNAI2/SLUG, which induces down-regulation of OCLN. Restricts caspase activation in response to selected stimuli, notably Fas stimulation, pathogen-mediated macrophage apoptosis, and erythroid differentiation (By similarity).</text>
</comment>
<comment type="catalytic activity">
    <reaction evidence="2">
        <text>L-seryl-[protein] + ATP = O-phospho-L-seryl-[protein] + ADP + H(+)</text>
        <dbReference type="Rhea" id="RHEA:17989"/>
        <dbReference type="Rhea" id="RHEA-COMP:9863"/>
        <dbReference type="Rhea" id="RHEA-COMP:11604"/>
        <dbReference type="ChEBI" id="CHEBI:15378"/>
        <dbReference type="ChEBI" id="CHEBI:29999"/>
        <dbReference type="ChEBI" id="CHEBI:30616"/>
        <dbReference type="ChEBI" id="CHEBI:83421"/>
        <dbReference type="ChEBI" id="CHEBI:456216"/>
        <dbReference type="EC" id="2.7.11.1"/>
    </reaction>
    <physiologicalReaction direction="left-to-right" evidence="2">
        <dbReference type="Rhea" id="RHEA:17990"/>
    </physiologicalReaction>
</comment>
<comment type="catalytic activity">
    <reaction evidence="2">
        <text>L-threonyl-[protein] + ATP = O-phospho-L-threonyl-[protein] + ADP + H(+)</text>
        <dbReference type="Rhea" id="RHEA:46608"/>
        <dbReference type="Rhea" id="RHEA-COMP:11060"/>
        <dbReference type="Rhea" id="RHEA-COMP:11605"/>
        <dbReference type="ChEBI" id="CHEBI:15378"/>
        <dbReference type="ChEBI" id="CHEBI:30013"/>
        <dbReference type="ChEBI" id="CHEBI:30616"/>
        <dbReference type="ChEBI" id="CHEBI:61977"/>
        <dbReference type="ChEBI" id="CHEBI:456216"/>
        <dbReference type="EC" id="2.7.11.1"/>
    </reaction>
    <physiologicalReaction direction="left-to-right" evidence="2">
        <dbReference type="Rhea" id="RHEA:46609"/>
    </physiologicalReaction>
</comment>
<comment type="cofactor">
    <cofactor evidence="1">
        <name>Zn(2+)</name>
        <dbReference type="ChEBI" id="CHEBI:29105"/>
    </cofactor>
    <text evidence="1">Binds 2 Zn(2+) ions per subunit.</text>
</comment>
<comment type="activity regulation">
    <text evidence="1">Regulation is a highly complex process involving membrane recruitment, protein-protein interactions, dimerization, and phosphorylation/dephosphorylation events. Ras-GTP recruits RAF1 to the membrane, thereby promoting its activation. The inactive conformation of RAF1 is maintained by autoinhibitory interactions occurring between the N-terminal regulatory and the C-terminal catalytic domains and by the binding of a 14-3-3 protein that contacts two phosphorylation sites, Ser-259 and Ser-621. Upon mitogenic stimulation, Ras and PPP2R1A cooperate to release autoinhibition and the subsequent phosphorylation of activating sites: Ser-338, Tyr-341, Thr-491, and Ser-494, yields a fully active kinase. Through a negative feedback mechanism involving MAPK1/ERK2, RAF1 is phosphorylated on Ser-29, Ser-43, Ser-289, Ser-296, Ser-301 and Ser-642 by MAPK1/ERK2, which yields an inactive, desensitized kinase. The signaling-competent conformation of RAF1 is finally re-established by the coordinated action of PIN1, a prolyl isomerase that converts pSer and pThr residues from the cis to the trans conformation, which is preferentially recognized and dephosphorylated by PPP2R1A. Activated by homodimerization and heterodimerization (with BRAF). Also regulated through association with other proteins such as KSR2, CNKSR1/CNK1, PEBP1/RKIP, PHB/prohibitin and SPRY4. PEBP1/RKIP acts by dissociating RAF1 from its substrates MAP2K1/MEK1 and MAP2K2/MEK2. PHB/prohibitin facilitates the displacement of 14-3-3 from RAF1 by activated Ras, thereby promoting cell membrane localization and phosphorylation of RAF1 at the activating Ser-338. SPRY4 inhibits Ras-independent, but not Ras-dependent, activation of RAF1. CNKSR1/CNK1 regulates Src-mediated RAF1 activation (By similarity).</text>
</comment>
<comment type="subunit">
    <text evidence="2 3 4">Monomer. Homodimer. Heterodimerizes with BRAF and this heterodimer possesses a highly increased kinase activity compared to the respective homodimers or monomers. Heterodimerization is mitogen-regulated and enhanced by 14-3-3 proteins. MAPK1/ERK2 activation can induce a negative feedback that promotes the dissociation of the heterodimer. Forms a multiprotein complex with Ras (M-Ras/MRAS), SHOC2 and protein phosphatase 1 (PPP1CA, PPP1CB and PPP1CC). Interacts with LZTR1. Interacts with Ras proteins; the interaction is antagonized by RIN1 (By similarity). Weakly interacts with RIT1. Interacts (via N-terminus) with RGS14 (via RBD domains); the interaction mediates the formation of a ternary complex with BRAF, a ternary complex inhibited by GNAI1 (By similarity). Probably forms a complex composed of chaperones HSP90 and HSP70, co-chaperones CDC37, PPP5C, TSC1 and client protein TSC2, CDK4, AKT, RAF1 and NR3C1; this complex does not contain co-chaperones STIP1/HOP and PTGES3/p23. Interacts with STK3/MST2; the interaction inhibits its pro-apoptotic activity. Interacts (when phosphorylated at Ser-259) with YWHAZ (unphosphorylated at 'Thr-232') (By similarity). Interacts with MAP2K1/MEK1 and MAP2K2/MEK2 (By similarity). Interacts with MAP3K5/ASF1 (via N-terminus) and this interaction inhibits the proapoptotic function of MAP3K5/ASK1. Interacts with PAK1 (via kinase domain) (By similarity). The phosphorylated form interacts with PIN1 (By similarity). The Ser-338 and Ser-339 phosphorylated form (by PAK1) interacts with BCL2. Interacts with PEBP1/RKIP and this interaction is enhanced if RAF1 is phosphorylated on residues Ser-338, Ser-339, Tyr-340 and Tyr-341. Interacts with ADCY2, ADCY5, ADCY6, DGKH, RCAN1/DSCR1, PPP1R12A, PKB/AKT1, PPP2CA, PPP2R1B, SPRY2, SPRY4, CNKSR1/CNK1, KSR2 and PHB/prohibitin (By similarity). Interacts with ROCK2 (By similarity). In its active form, interacts with PRMT5. Interacts with FAM83B; displaces 14-3-3 proteins from RAF1 and activates RAF1. Interacts with PDE8A; the interaction promotes RAF1 activity. Interacts with MFHAS1. Interacts with GLS (By similarity). Interacts with NEK10 and MAP2K1; the interaction is direct with NEK10 and required for ERK1/2-signaling pathway activation in response to UV irradiation (By similarity).</text>
</comment>
<comment type="subcellular location">
    <subcellularLocation>
        <location evidence="1">Cytoplasm</location>
    </subcellularLocation>
    <subcellularLocation>
        <location evidence="1">Cell membrane</location>
    </subcellularLocation>
    <subcellularLocation>
        <location evidence="1">Mitochondrion</location>
    </subcellularLocation>
    <subcellularLocation>
        <location evidence="1">Nucleus</location>
    </subcellularLocation>
    <text evidence="1">Colocalizes with RGS14 and BRAF in both the cytoplasm and membranes. Phosphorylation at Ser-259 impairs its membrane accumulation. Recruited to the cell membrane by the active Ras protein. Phosphorylation at Ser-338 and Ser-339 by PAK1 is required for its mitochondrial localization. Retinoic acid-induced Ser-621 phosphorylated form of RAF1 is predominantly localized at the nucleus (By similarity).</text>
</comment>
<comment type="PTM">
    <text evidence="2">Phosphorylation at Thr-269, Ser-338, Tyr-341, Thr-491 and Ser-494 results in its activation. Phosphorylation at Ser-29, Ser-43, Ser-289, Ser-296, Ser-301 and Ser-642 by MAPK1/ERK2 results in its inactivation. Phosphorylation at Ser-259 induces the interaction with YWHAZ and inactivates kinase activity. Dephosphorylation of Ser-259 by the SHOC2-MRAS-PP1c (SMP) complex consisting of SHOC2, GTP-bound M-Ras/MRAS and the catalytic subunit of protein phosphatase 1 (PPP1CA, PPP1CB or PPP1CC); this relieves inactivation and stimulates kinase activity (By similarity). Phosphorylation at Ser-338 by PAK1 and PAK5 and Ser-339 by PAK1 is required for its mitochondrial localization (By similarity). Phosphorylation at Ser-621 in response to growth factor treatment stabilizes the protein, possibly by preventing proteasomal degradation. Phosphorylation at Ser-289, Ser-296, Ser-301, Ser-338 and Ser-621 are somehow linked to the methylation potential of cells. Treatment of cells with HGF in the presence of the methylation inhibitor 5'-methylthioadenosine (MTA) results in increased phosphorylation at Ser-338 and Ser-621 and decreased phosphorylation at Ser-296, Ser-301 and Ser-338. Dephosphorylation at Ser-338 by PPP5C results in a decreased of activity (By similarity).</text>
</comment>
<comment type="PTM">
    <text evidence="2">Methylated at Arg-563 in response to EGF treatment. This modification leads to destabilization of the protein, possibly through proteasomal degradation.</text>
</comment>
<comment type="similarity">
    <text evidence="10">Belongs to the protein kinase superfamily. TKL Ser/Thr protein kinase family. RAF subfamily.</text>
</comment>
<proteinExistence type="evidence at transcript level"/>
<keyword id="KW-0067">ATP-binding</keyword>
<keyword id="KW-1003">Cell membrane</keyword>
<keyword id="KW-0963">Cytoplasm</keyword>
<keyword id="KW-0418">Kinase</keyword>
<keyword id="KW-0472">Membrane</keyword>
<keyword id="KW-0479">Metal-binding</keyword>
<keyword id="KW-0488">Methylation</keyword>
<keyword id="KW-0496">Mitochondrion</keyword>
<keyword id="KW-0547">Nucleotide-binding</keyword>
<keyword id="KW-0539">Nucleus</keyword>
<keyword id="KW-0597">Phosphoprotein</keyword>
<keyword id="KW-0656">Proto-oncogene</keyword>
<keyword id="KW-1185">Reference proteome</keyword>
<keyword id="KW-0723">Serine/threonine-protein kinase</keyword>
<keyword id="KW-0808">Transferase</keyword>
<keyword id="KW-0862">Zinc</keyword>
<keyword id="KW-0863">Zinc-finger</keyword>
<feature type="chain" id="PRO_0000260304" description="RAF proto-oncogene serine/threonine-protein kinase">
    <location>
        <begin position="1"/>
        <end position="648"/>
    </location>
</feature>
<feature type="domain" description="RBD" evidence="7">
    <location>
        <begin position="56"/>
        <end position="131"/>
    </location>
</feature>
<feature type="domain" description="Protein kinase" evidence="5">
    <location>
        <begin position="349"/>
        <end position="609"/>
    </location>
</feature>
<feature type="zinc finger region" description="Phorbol-ester/DAG-type" evidence="6">
    <location>
        <begin position="138"/>
        <end position="184"/>
    </location>
</feature>
<feature type="region of interest" description="Disordered" evidence="9">
    <location>
        <begin position="220"/>
        <end position="334"/>
    </location>
</feature>
<feature type="region of interest" description="Interaction with PEBP1/RKIP" evidence="1">
    <location>
        <begin position="331"/>
        <end position="349"/>
    </location>
</feature>
<feature type="compositionally biased region" description="Polar residues" evidence="9">
    <location>
        <begin position="239"/>
        <end position="271"/>
    </location>
</feature>
<feature type="compositionally biased region" description="Basic and acidic residues" evidence="9">
    <location>
        <begin position="275"/>
        <end position="285"/>
    </location>
</feature>
<feature type="compositionally biased region" description="Low complexity" evidence="9">
    <location>
        <begin position="286"/>
        <end position="301"/>
    </location>
</feature>
<feature type="active site" description="Proton acceptor" evidence="5 8">
    <location>
        <position position="468"/>
    </location>
</feature>
<feature type="binding site" evidence="1">
    <location>
        <position position="139"/>
    </location>
    <ligand>
        <name>Zn(2+)</name>
        <dbReference type="ChEBI" id="CHEBI:29105"/>
        <label>1</label>
    </ligand>
</feature>
<feature type="binding site" evidence="1">
    <location>
        <position position="152"/>
    </location>
    <ligand>
        <name>Zn(2+)</name>
        <dbReference type="ChEBI" id="CHEBI:29105"/>
        <label>2</label>
    </ligand>
</feature>
<feature type="binding site" evidence="1">
    <location>
        <position position="155"/>
    </location>
    <ligand>
        <name>Zn(2+)</name>
        <dbReference type="ChEBI" id="CHEBI:29105"/>
        <label>2</label>
    </ligand>
</feature>
<feature type="binding site" evidence="1">
    <location>
        <position position="165"/>
    </location>
    <ligand>
        <name>Zn(2+)</name>
        <dbReference type="ChEBI" id="CHEBI:29105"/>
        <label>1</label>
    </ligand>
</feature>
<feature type="binding site" evidence="1">
    <location>
        <position position="168"/>
    </location>
    <ligand>
        <name>Zn(2+)</name>
        <dbReference type="ChEBI" id="CHEBI:29105"/>
        <label>1</label>
    </ligand>
</feature>
<feature type="binding site" evidence="1">
    <location>
        <position position="173"/>
    </location>
    <ligand>
        <name>Zn(2+)</name>
        <dbReference type="ChEBI" id="CHEBI:29105"/>
        <label>2</label>
    </ligand>
</feature>
<feature type="binding site" evidence="1">
    <location>
        <position position="176"/>
    </location>
    <ligand>
        <name>Zn(2+)</name>
        <dbReference type="ChEBI" id="CHEBI:29105"/>
        <label>2</label>
    </ligand>
</feature>
<feature type="binding site" evidence="1">
    <location>
        <position position="184"/>
    </location>
    <ligand>
        <name>Zn(2+)</name>
        <dbReference type="ChEBI" id="CHEBI:29105"/>
        <label>1</label>
    </ligand>
</feature>
<feature type="binding site" evidence="5">
    <location>
        <begin position="355"/>
        <end position="363"/>
    </location>
    <ligand>
        <name>ATP</name>
        <dbReference type="ChEBI" id="CHEBI:30616"/>
    </ligand>
</feature>
<feature type="binding site" evidence="5">
    <location>
        <position position="375"/>
    </location>
    <ligand>
        <name>ATP</name>
        <dbReference type="ChEBI" id="CHEBI:30616"/>
    </ligand>
</feature>
<feature type="modified residue" description="Phosphoserine; by MAPK1" evidence="4">
    <location>
        <position position="29"/>
    </location>
</feature>
<feature type="modified residue" description="Phosphoserine; by PKA and MAPK1" evidence="2">
    <location>
        <position position="43"/>
    </location>
</feature>
<feature type="modified residue" description="Phosphoserine; by PKA" evidence="2">
    <location>
        <position position="233"/>
    </location>
</feature>
<feature type="modified residue" description="Phosphoserine" evidence="2">
    <location>
        <position position="252"/>
    </location>
</feature>
<feature type="modified residue" description="Phosphoserine; by PKA, PKC and PKB/AKT1" evidence="2">
    <location>
        <position position="259"/>
    </location>
</feature>
<feature type="modified residue" description="Phosphothreonine; by autocatalysis" evidence="2">
    <location>
        <position position="268"/>
    </location>
</feature>
<feature type="modified residue" description="Phosphothreonine; by PKA" evidence="2">
    <location>
        <position position="269"/>
    </location>
</feature>
<feature type="modified residue" description="Phosphoserine; by MAPK1" evidence="2">
    <location>
        <position position="289"/>
    </location>
</feature>
<feature type="modified residue" description="Phosphoserine; by MAPK1" evidence="4">
    <location>
        <position position="296"/>
    </location>
</feature>
<feature type="modified residue" description="Phosphoserine; by MAPK1" evidence="2">
    <location>
        <position position="301"/>
    </location>
</feature>
<feature type="modified residue" description="Phosphoserine; by PAK1, PAK2, PAK3 and PAK5" evidence="2">
    <location>
        <position position="338"/>
    </location>
</feature>
<feature type="modified residue" description="Phosphoserine; by PAK1, PAK2 and PAK3" evidence="2">
    <location>
        <position position="339"/>
    </location>
</feature>
<feature type="modified residue" description="Phosphotyrosine; by SRC" evidence="2">
    <location>
        <position position="340"/>
    </location>
</feature>
<feature type="modified residue" description="Phosphotyrosine; by SRC" evidence="2">
    <location>
        <position position="341"/>
    </location>
</feature>
<feature type="modified residue" description="Phosphoserine" evidence="2">
    <location>
        <position position="471"/>
    </location>
</feature>
<feature type="modified residue" description="Phosphothreonine" evidence="2">
    <location>
        <position position="491"/>
    </location>
</feature>
<feature type="modified residue" description="Phosphoserine" evidence="2">
    <location>
        <position position="494"/>
    </location>
</feature>
<feature type="modified residue" description="Phosphoserine; by PKC" evidence="2">
    <location>
        <position position="497"/>
    </location>
</feature>
<feature type="modified residue" description="Phosphoserine; by PKC" evidence="2">
    <location>
        <position position="499"/>
    </location>
</feature>
<feature type="modified residue" description="Symmetric dimethylarginine; by PRMT5" evidence="2">
    <location>
        <position position="563"/>
    </location>
</feature>
<feature type="modified residue" description="Phosphoserine" evidence="2">
    <location>
        <position position="621"/>
    </location>
</feature>
<feature type="modified residue" description="Phosphoserine; by MAPK1" evidence="2">
    <location>
        <position position="642"/>
    </location>
</feature>
<reference key="1">
    <citation type="submission" date="2004-11" db="EMBL/GenBank/DDBJ databases">
        <authorList>
            <consortium name="The German cDNA consortium"/>
        </authorList>
    </citation>
    <scope>NUCLEOTIDE SEQUENCE [LARGE SCALE MRNA]</scope>
    <source>
        <tissue>Kidney</tissue>
    </source>
</reference>
<organism>
    <name type="scientific">Pongo abelii</name>
    <name type="common">Sumatran orangutan</name>
    <name type="synonym">Pongo pygmaeus abelii</name>
    <dbReference type="NCBI Taxonomy" id="9601"/>
    <lineage>
        <taxon>Eukaryota</taxon>
        <taxon>Metazoa</taxon>
        <taxon>Chordata</taxon>
        <taxon>Craniata</taxon>
        <taxon>Vertebrata</taxon>
        <taxon>Euteleostomi</taxon>
        <taxon>Mammalia</taxon>
        <taxon>Eutheria</taxon>
        <taxon>Euarchontoglires</taxon>
        <taxon>Primates</taxon>
        <taxon>Haplorrhini</taxon>
        <taxon>Catarrhini</taxon>
        <taxon>Hominidae</taxon>
        <taxon>Pongo</taxon>
    </lineage>
</organism>
<protein>
    <recommendedName>
        <fullName>RAF proto-oncogene serine/threonine-protein kinase</fullName>
        <ecNumber evidence="2">2.7.11.1</ecNumber>
    </recommendedName>
    <alternativeName>
        <fullName>Proto-oncogene c-RAF</fullName>
        <shortName>cRaf</shortName>
    </alternativeName>
    <alternativeName>
        <fullName>Raf-1</fullName>
    </alternativeName>
</protein>
<gene>
    <name type="primary">RAF1</name>
</gene>
<evidence type="ECO:0000250" key="1"/>
<evidence type="ECO:0000250" key="2">
    <source>
        <dbReference type="UniProtKB" id="P04049"/>
    </source>
</evidence>
<evidence type="ECO:0000250" key="3">
    <source>
        <dbReference type="UniProtKB" id="P11345"/>
    </source>
</evidence>
<evidence type="ECO:0000250" key="4">
    <source>
        <dbReference type="UniProtKB" id="Q99N57"/>
    </source>
</evidence>
<evidence type="ECO:0000255" key="5">
    <source>
        <dbReference type="PROSITE-ProRule" id="PRU00159"/>
    </source>
</evidence>
<evidence type="ECO:0000255" key="6">
    <source>
        <dbReference type="PROSITE-ProRule" id="PRU00226"/>
    </source>
</evidence>
<evidence type="ECO:0000255" key="7">
    <source>
        <dbReference type="PROSITE-ProRule" id="PRU00262"/>
    </source>
</evidence>
<evidence type="ECO:0000255" key="8">
    <source>
        <dbReference type="PROSITE-ProRule" id="PRU10027"/>
    </source>
</evidence>
<evidence type="ECO:0000256" key="9">
    <source>
        <dbReference type="SAM" id="MobiDB-lite"/>
    </source>
</evidence>
<evidence type="ECO:0000305" key="10"/>
<accession>Q5R5M7</accession>
<dbReference type="EC" id="2.7.11.1" evidence="2"/>
<dbReference type="EMBL" id="CR860830">
    <property type="protein sequence ID" value="CAH92939.1"/>
    <property type="molecule type" value="mRNA"/>
</dbReference>
<dbReference type="RefSeq" id="NP_001126730.1">
    <property type="nucleotide sequence ID" value="NM_001133258.1"/>
</dbReference>
<dbReference type="BMRB" id="Q5R5M7"/>
<dbReference type="SMR" id="Q5R5M7"/>
<dbReference type="FunCoup" id="Q5R5M7">
    <property type="interactions" value="4639"/>
</dbReference>
<dbReference type="STRING" id="9601.ENSPPYP00000014975"/>
<dbReference type="Ensembl" id="ENSPPYT00000015575.2">
    <property type="protein sequence ID" value="ENSPPYP00000014975.1"/>
    <property type="gene ID" value="ENSPPYG00000013388.2"/>
</dbReference>
<dbReference type="GeneID" id="100173732"/>
<dbReference type="KEGG" id="pon:100173732"/>
<dbReference type="CTD" id="5894"/>
<dbReference type="eggNOG" id="KOG0193">
    <property type="taxonomic scope" value="Eukaryota"/>
</dbReference>
<dbReference type="GeneTree" id="ENSGT00940000156084"/>
<dbReference type="HOGENOM" id="CLU_023684_1_1_1"/>
<dbReference type="InParanoid" id="Q5R5M7"/>
<dbReference type="OrthoDB" id="774951at2759"/>
<dbReference type="TreeFam" id="TF317006"/>
<dbReference type="Proteomes" id="UP000001595">
    <property type="component" value="Chromosome 3"/>
</dbReference>
<dbReference type="GO" id="GO:0005737">
    <property type="term" value="C:cytoplasm"/>
    <property type="evidence" value="ECO:0000250"/>
    <property type="project" value="UniProtKB"/>
</dbReference>
<dbReference type="GO" id="GO:0005829">
    <property type="term" value="C:cytosol"/>
    <property type="evidence" value="ECO:0007669"/>
    <property type="project" value="TreeGrafter"/>
</dbReference>
<dbReference type="GO" id="GO:0005739">
    <property type="term" value="C:mitochondrion"/>
    <property type="evidence" value="ECO:0007669"/>
    <property type="project" value="UniProtKB-SubCell"/>
</dbReference>
<dbReference type="GO" id="GO:0005634">
    <property type="term" value="C:nucleus"/>
    <property type="evidence" value="ECO:0007669"/>
    <property type="project" value="UniProtKB-SubCell"/>
</dbReference>
<dbReference type="GO" id="GO:0005886">
    <property type="term" value="C:plasma membrane"/>
    <property type="evidence" value="ECO:0000250"/>
    <property type="project" value="UniProtKB"/>
</dbReference>
<dbReference type="GO" id="GO:0005524">
    <property type="term" value="F:ATP binding"/>
    <property type="evidence" value="ECO:0007669"/>
    <property type="project" value="UniProtKB-KW"/>
</dbReference>
<dbReference type="GO" id="GO:0004709">
    <property type="term" value="F:MAP kinase kinase kinase activity"/>
    <property type="evidence" value="ECO:0007669"/>
    <property type="project" value="TreeGrafter"/>
</dbReference>
<dbReference type="GO" id="GO:0106310">
    <property type="term" value="F:protein serine kinase activity"/>
    <property type="evidence" value="ECO:0007669"/>
    <property type="project" value="RHEA"/>
</dbReference>
<dbReference type="GO" id="GO:0008270">
    <property type="term" value="F:zinc ion binding"/>
    <property type="evidence" value="ECO:0007669"/>
    <property type="project" value="UniProtKB-KW"/>
</dbReference>
<dbReference type="GO" id="GO:0043066">
    <property type="term" value="P:negative regulation of apoptotic process"/>
    <property type="evidence" value="ECO:0007669"/>
    <property type="project" value="UniProtKB-ARBA"/>
</dbReference>
<dbReference type="GO" id="GO:0036211">
    <property type="term" value="P:protein modification process"/>
    <property type="evidence" value="ECO:0007669"/>
    <property type="project" value="UniProtKB-ARBA"/>
</dbReference>
<dbReference type="CDD" id="cd20870">
    <property type="entry name" value="C1_A_C-Raf"/>
    <property type="match status" value="1"/>
</dbReference>
<dbReference type="CDD" id="cd17135">
    <property type="entry name" value="RBD_CRAF"/>
    <property type="match status" value="1"/>
</dbReference>
<dbReference type="CDD" id="cd14149">
    <property type="entry name" value="STKc_C-Raf"/>
    <property type="match status" value="1"/>
</dbReference>
<dbReference type="FunFam" id="3.10.20.90:FF:000015">
    <property type="entry name" value="B-Raf proto-oncogene serine/threonine-protein kinase"/>
    <property type="match status" value="1"/>
</dbReference>
<dbReference type="FunFam" id="3.30.200.20:FF:000024">
    <property type="entry name" value="B-Raf proto-oncogene serine/threonine-protein kinase"/>
    <property type="match status" value="1"/>
</dbReference>
<dbReference type="FunFam" id="3.30.60.20:FF:000004">
    <property type="entry name" value="B-Raf proto-oncogene serine/threonine-protein kinase"/>
    <property type="match status" value="1"/>
</dbReference>
<dbReference type="FunFam" id="1.10.510.10:FF:000036">
    <property type="entry name" value="RAF proto-oncogene serine/threonine-protein kinase"/>
    <property type="match status" value="1"/>
</dbReference>
<dbReference type="Gene3D" id="3.30.60.20">
    <property type="match status" value="1"/>
</dbReference>
<dbReference type="Gene3D" id="3.10.20.90">
    <property type="entry name" value="Phosphatidylinositol 3-kinase Catalytic Subunit, Chain A, domain 1"/>
    <property type="match status" value="1"/>
</dbReference>
<dbReference type="Gene3D" id="3.30.200.20">
    <property type="entry name" value="Phosphorylase Kinase, domain 1"/>
    <property type="match status" value="1"/>
</dbReference>
<dbReference type="Gene3D" id="1.10.510.10">
    <property type="entry name" value="Transferase(Phosphotransferase) domain 1"/>
    <property type="match status" value="1"/>
</dbReference>
<dbReference type="InterPro" id="IPR046349">
    <property type="entry name" value="C1-like_sf"/>
</dbReference>
<dbReference type="InterPro" id="IPR020454">
    <property type="entry name" value="DAG/PE-bd"/>
</dbReference>
<dbReference type="InterPro" id="IPR011009">
    <property type="entry name" value="Kinase-like_dom_sf"/>
</dbReference>
<dbReference type="InterPro" id="IPR002219">
    <property type="entry name" value="PE/DAG-bd"/>
</dbReference>
<dbReference type="InterPro" id="IPR000719">
    <property type="entry name" value="Prot_kinase_dom"/>
</dbReference>
<dbReference type="InterPro" id="IPR017441">
    <property type="entry name" value="Protein_kinase_ATP_BS"/>
</dbReference>
<dbReference type="InterPro" id="IPR003116">
    <property type="entry name" value="RBD_dom"/>
</dbReference>
<dbReference type="InterPro" id="IPR008271">
    <property type="entry name" value="Ser/Thr_kinase_AS"/>
</dbReference>
<dbReference type="InterPro" id="IPR051681">
    <property type="entry name" value="Ser/Thr_Kinases-Pseudokinases"/>
</dbReference>
<dbReference type="InterPro" id="IPR029071">
    <property type="entry name" value="Ubiquitin-like_domsf"/>
</dbReference>
<dbReference type="PANTHER" id="PTHR44329:SF22">
    <property type="entry name" value="RAF PROTO-ONCOGENE SERINE_THREONINE-PROTEIN KINASE"/>
    <property type="match status" value="1"/>
</dbReference>
<dbReference type="PANTHER" id="PTHR44329">
    <property type="entry name" value="SERINE/THREONINE-PROTEIN KINASE TNNI3K-RELATED"/>
    <property type="match status" value="1"/>
</dbReference>
<dbReference type="Pfam" id="PF00130">
    <property type="entry name" value="C1_1"/>
    <property type="match status" value="1"/>
</dbReference>
<dbReference type="Pfam" id="PF00069">
    <property type="entry name" value="Pkinase"/>
    <property type="match status" value="1"/>
</dbReference>
<dbReference type="Pfam" id="PF02196">
    <property type="entry name" value="RBD"/>
    <property type="match status" value="1"/>
</dbReference>
<dbReference type="PRINTS" id="PR00008">
    <property type="entry name" value="DAGPEDOMAIN"/>
</dbReference>
<dbReference type="SMART" id="SM00109">
    <property type="entry name" value="C1"/>
    <property type="match status" value="1"/>
</dbReference>
<dbReference type="SMART" id="SM00455">
    <property type="entry name" value="RBD"/>
    <property type="match status" value="1"/>
</dbReference>
<dbReference type="SMART" id="SM00220">
    <property type="entry name" value="S_TKc"/>
    <property type="match status" value="1"/>
</dbReference>
<dbReference type="SUPFAM" id="SSF57889">
    <property type="entry name" value="Cysteine-rich domain"/>
    <property type="match status" value="1"/>
</dbReference>
<dbReference type="SUPFAM" id="SSF56112">
    <property type="entry name" value="Protein kinase-like (PK-like)"/>
    <property type="match status" value="1"/>
</dbReference>
<dbReference type="SUPFAM" id="SSF54236">
    <property type="entry name" value="Ubiquitin-like"/>
    <property type="match status" value="1"/>
</dbReference>
<dbReference type="PROSITE" id="PS00107">
    <property type="entry name" value="PROTEIN_KINASE_ATP"/>
    <property type="match status" value="1"/>
</dbReference>
<dbReference type="PROSITE" id="PS50011">
    <property type="entry name" value="PROTEIN_KINASE_DOM"/>
    <property type="match status" value="1"/>
</dbReference>
<dbReference type="PROSITE" id="PS00108">
    <property type="entry name" value="PROTEIN_KINASE_ST"/>
    <property type="match status" value="1"/>
</dbReference>
<dbReference type="PROSITE" id="PS50898">
    <property type="entry name" value="RBD"/>
    <property type="match status" value="1"/>
</dbReference>
<dbReference type="PROSITE" id="PS00479">
    <property type="entry name" value="ZF_DAG_PE_1"/>
    <property type="match status" value="1"/>
</dbReference>
<dbReference type="PROSITE" id="PS50081">
    <property type="entry name" value="ZF_DAG_PE_2"/>
    <property type="match status" value="1"/>
</dbReference>
<name>RAF1_PONAB</name>